<keyword id="KW-0002">3D-structure</keyword>
<keyword id="KW-0378">Hydrolase</keyword>
<keyword id="KW-0479">Metal-binding</keyword>
<keyword id="KW-0507">mRNA processing</keyword>
<keyword id="KW-0540">Nuclease</keyword>
<keyword id="KW-0547">Nucleotide-binding</keyword>
<keyword id="KW-0539">Nucleus</keyword>
<keyword id="KW-1185">Reference proteome</keyword>
<keyword id="KW-0694">RNA-binding</keyword>
<sequence length="391" mass="45689">MAKSLPLNSRSKTTALKQPRELFSYARDIDGKYVYDDPENSLSYYYLPDSTIDTGIDLQGGYSKFKKIPDEQNLADFNSLLKAIIKYETSEGKKISSDIITFREIMTKILSLPYNLTDPIDLYVVPFDGQLFIKSDDELDMKRRKEQEVRMKQTNTVERYDYMKRCEYVGYKFETIATIPKPWSQVSRSQIENRNKKVVNNYEQYLSVIRTGIGNVKLVLAGEIDCCWDYLPDEQNKKLNHYVELKTSRIIENNSQVVSFEQKLFKAWCQCFLMGVTKIIYGFRDNNLILKNVELFNTEEIPILIKNNPLTNAATEKKINCTNALKWYGAVVDWLNTTVDKKDETKSYRLKYDPVRKSFTLSETESETNEKLRNGELLTPEFTEWRQSLKK</sequence>
<proteinExistence type="evidence at protein level"/>
<protein>
    <recommendedName>
        <fullName evidence="7">Decapping nuclease RAI1</fullName>
        <shortName evidence="6">CaRai1</shortName>
        <ecNumber evidence="5">3.6.1.-</ecNumber>
    </recommendedName>
    <alternativeName>
        <fullName evidence="7">NAD-capped RNA hydrolase RAI1</fullName>
        <shortName evidence="7">DeNADding enzyme RAI1</shortName>
        <ecNumber evidence="1">3.6.1.-</ecNumber>
    </alternativeName>
</protein>
<name>DXO_CANAL</name>
<gene>
    <name evidence="6" type="primary">RAI1</name>
    <name type="ordered locus">CAALFM_C106800WA</name>
    <name type="ORF">CaO19.13610</name>
    <name type="ORF">CaO19.6230</name>
</gene>
<evidence type="ECO:0000250" key="1">
    <source>
        <dbReference type="UniProtKB" id="O13836"/>
    </source>
</evidence>
<evidence type="ECO:0000250" key="2">
    <source>
        <dbReference type="UniProtKB" id="O70348"/>
    </source>
</evidence>
<evidence type="ECO:0000250" key="3">
    <source>
        <dbReference type="UniProtKB" id="P53063"/>
    </source>
</evidence>
<evidence type="ECO:0000250" key="4">
    <source>
        <dbReference type="UniProtKB" id="Q06349"/>
    </source>
</evidence>
<evidence type="ECO:0000269" key="5">
    <source>
    </source>
</evidence>
<evidence type="ECO:0000303" key="6">
    <source>
    </source>
</evidence>
<evidence type="ECO:0000305" key="7"/>
<evidence type="ECO:0007744" key="8">
    <source>
        <dbReference type="PDB" id="5BTH"/>
    </source>
</evidence>
<evidence type="ECO:0007744" key="9">
    <source>
        <dbReference type="PDB" id="5BUD"/>
    </source>
</evidence>
<evidence type="ECO:0007829" key="10">
    <source>
        <dbReference type="PDB" id="5BTH"/>
    </source>
</evidence>
<evidence type="ECO:0007829" key="11">
    <source>
        <dbReference type="PDB" id="5BUD"/>
    </source>
</evidence>
<comment type="function">
    <text evidence="1 2 4 5">Decapping enzyme for NAD-capped RNAs: specifically hydrolyzes the nicotinamide adenine dinucleotide (NAD) cap from a subset of RNAs by removing the entire NAD moiety from the 5'-end of an NAD-capped RNA (By similarity). The NAD-cap is present at the 5'-end of some RNAs and snoRNAs. In contrast to the canonical 5'-end N7 methylguanosine (m7G) cap, the NAD cap promotes mRNA decay (By similarity). Also acts as a non-canonical decapping enzyme that removes the entire cap structure of m7G capped or incompletely capped RNAs (PubMed:26101253). Has decapping activity toward incomplete 5'-end m7G cap mRNAs such as unmethylated 5'-end-capped RNA (cap0), while it has no activity toward 2'-O-ribose methylated m7G cap (cap1) (By similarity). Also possesses RNA 5'-pyrophosphohydrolase activity by hydrolyzing the 5'-end triphosphate to release pyrophosphates (By similarity). Stimulates exoribonuclease activity of Rat1, allowing it to degrade RNAs with stable secondary structure more effectively (By similarity).</text>
</comment>
<comment type="catalytic activity">
    <reaction evidence="1">
        <text>a 5'-end NAD(+)-phospho-ribonucleoside in mRNA + H2O = a 5'-end phospho-ribonucleoside in mRNA + NAD(+) + H(+)</text>
        <dbReference type="Rhea" id="RHEA:60880"/>
        <dbReference type="Rhea" id="RHEA-COMP:15692"/>
        <dbReference type="Rhea" id="RHEA-COMP:15698"/>
        <dbReference type="ChEBI" id="CHEBI:15377"/>
        <dbReference type="ChEBI" id="CHEBI:15378"/>
        <dbReference type="ChEBI" id="CHEBI:57540"/>
        <dbReference type="ChEBI" id="CHEBI:138282"/>
        <dbReference type="ChEBI" id="CHEBI:144029"/>
    </reaction>
    <physiologicalReaction direction="left-to-right" evidence="1">
        <dbReference type="Rhea" id="RHEA:60881"/>
    </physiologicalReaction>
</comment>
<comment type="catalytic activity">
    <reaction evidence="3">
        <text>a 5'-end (N(7)-methyl 5'-triphosphoguanosine)-ribonucleoside-ribonucleotide in mRNA + H2O = a (N(7)-methyl 5'-triphosphoguanosine)-nucleoside + a 5'-end phospho-ribonucleoside in mRNA + H(+)</text>
        <dbReference type="Rhea" id="RHEA:66928"/>
        <dbReference type="Rhea" id="RHEA-COMP:15692"/>
        <dbReference type="Rhea" id="RHEA-COMP:17313"/>
        <dbReference type="ChEBI" id="CHEBI:15377"/>
        <dbReference type="ChEBI" id="CHEBI:15378"/>
        <dbReference type="ChEBI" id="CHEBI:138282"/>
        <dbReference type="ChEBI" id="CHEBI:172876"/>
        <dbReference type="ChEBI" id="CHEBI:172877"/>
    </reaction>
    <physiologicalReaction direction="left-to-right" evidence="3">
        <dbReference type="Rhea" id="RHEA:66929"/>
    </physiologicalReaction>
</comment>
<comment type="catalytic activity">
    <reaction evidence="1">
        <text>a 5'-end triphospho-ribonucleoside in mRNA + H2O = a 5'-end phospho-ribonucleoside in mRNA + diphosphate + H(+)</text>
        <dbReference type="Rhea" id="RHEA:78683"/>
        <dbReference type="Rhea" id="RHEA-COMP:15692"/>
        <dbReference type="Rhea" id="RHEA-COMP:17164"/>
        <dbReference type="ChEBI" id="CHEBI:15377"/>
        <dbReference type="ChEBI" id="CHEBI:15378"/>
        <dbReference type="ChEBI" id="CHEBI:33019"/>
        <dbReference type="ChEBI" id="CHEBI:138282"/>
        <dbReference type="ChEBI" id="CHEBI:167618"/>
    </reaction>
    <physiologicalReaction direction="left-to-right" evidence="1">
        <dbReference type="Rhea" id="RHEA:78684"/>
    </physiologicalReaction>
</comment>
<comment type="cofactor">
    <cofactor evidence="5">
        <name>a divalent metal cation</name>
        <dbReference type="ChEBI" id="CHEBI:60240"/>
    </cofactor>
    <text evidence="5">Divalent metal cation.</text>
</comment>
<comment type="subunit">
    <text evidence="1">Interacts with RAT1; the interaction is direct, stabilizes RAT1 protein structure and stimulates its exoribonuclease activity (By similarity). The interaction also stimulates RAI1 pyrophosphohydrolase activity, probably by recruiting it to mRNA substrates (By similarity).</text>
</comment>
<comment type="subcellular location">
    <subcellularLocation>
        <location evidence="3">Nucleus</location>
    </subcellularLocation>
</comment>
<comment type="similarity">
    <text evidence="7">Belongs to the DXO/Dom3Z family.</text>
</comment>
<organism>
    <name type="scientific">Candida albicans (strain SC5314 / ATCC MYA-2876)</name>
    <name type="common">Yeast</name>
    <dbReference type="NCBI Taxonomy" id="237561"/>
    <lineage>
        <taxon>Eukaryota</taxon>
        <taxon>Fungi</taxon>
        <taxon>Dikarya</taxon>
        <taxon>Ascomycota</taxon>
        <taxon>Saccharomycotina</taxon>
        <taxon>Pichiomycetes</taxon>
        <taxon>Debaryomycetaceae</taxon>
        <taxon>Candida/Lodderomyces clade</taxon>
        <taxon>Candida</taxon>
    </lineage>
</organism>
<feature type="chain" id="PRO_0000249828" description="Decapping nuclease RAI1">
    <location>
        <begin position="1"/>
        <end position="391"/>
    </location>
</feature>
<feature type="binding site" evidence="5 8 9">
    <location>
        <position position="174"/>
    </location>
    <ligand>
        <name>a divalent metal cation</name>
        <dbReference type="ChEBI" id="CHEBI:60240"/>
    </ligand>
</feature>
<feature type="binding site" evidence="2">
    <location>
        <position position="223"/>
    </location>
    <ligand>
        <name>substrate</name>
    </ligand>
</feature>
<feature type="binding site" evidence="5 8 9">
    <location>
        <position position="225"/>
    </location>
    <ligand>
        <name>a divalent metal cation</name>
        <dbReference type="ChEBI" id="CHEBI:60240"/>
    </ligand>
</feature>
<feature type="binding site" evidence="5 8 9">
    <location>
        <position position="244"/>
    </location>
    <ligand>
        <name>a divalent metal cation</name>
        <dbReference type="ChEBI" id="CHEBI:60240"/>
    </ligand>
</feature>
<feature type="binding site" evidence="5 8 9">
    <location>
        <position position="245"/>
    </location>
    <ligand>
        <name>a divalent metal cation</name>
        <dbReference type="ChEBI" id="CHEBI:60240"/>
    </ligand>
</feature>
<feature type="binding site" evidence="2">
    <location>
        <position position="246"/>
    </location>
    <ligand>
        <name>substrate</name>
    </ligand>
</feature>
<feature type="binding site" evidence="2">
    <location>
        <position position="270"/>
    </location>
    <ligand>
        <name>substrate</name>
    </ligand>
</feature>
<feature type="strand" evidence="10">
    <location>
        <begin position="2"/>
        <end position="4"/>
    </location>
</feature>
<feature type="strand" evidence="11">
    <location>
        <begin position="20"/>
        <end position="27"/>
    </location>
</feature>
<feature type="helix" evidence="11">
    <location>
        <begin position="38"/>
        <end position="41"/>
    </location>
</feature>
<feature type="helix" evidence="11">
    <location>
        <begin position="49"/>
        <end position="53"/>
    </location>
</feature>
<feature type="turn" evidence="11">
    <location>
        <begin position="58"/>
        <end position="61"/>
    </location>
</feature>
<feature type="helix" evidence="11">
    <location>
        <begin position="62"/>
        <end position="64"/>
    </location>
</feature>
<feature type="helix" evidence="11">
    <location>
        <begin position="70"/>
        <end position="72"/>
    </location>
</feature>
<feature type="helix" evidence="11">
    <location>
        <begin position="77"/>
        <end position="91"/>
    </location>
</feature>
<feature type="strand" evidence="11">
    <location>
        <begin position="98"/>
        <end position="102"/>
    </location>
</feature>
<feature type="helix" evidence="11">
    <location>
        <begin position="103"/>
        <end position="111"/>
    </location>
</feature>
<feature type="helix" evidence="11">
    <location>
        <begin position="112"/>
        <end position="114"/>
    </location>
</feature>
<feature type="strand" evidence="11">
    <location>
        <begin position="120"/>
        <end position="127"/>
    </location>
</feature>
<feature type="strand" evidence="11">
    <location>
        <begin position="130"/>
        <end position="135"/>
    </location>
</feature>
<feature type="helix" evidence="11">
    <location>
        <begin position="137"/>
        <end position="154"/>
    </location>
</feature>
<feature type="helix" evidence="11">
    <location>
        <begin position="157"/>
        <end position="177"/>
    </location>
</feature>
<feature type="strand" evidence="11">
    <location>
        <begin position="178"/>
        <end position="181"/>
    </location>
</feature>
<feature type="helix" evidence="11">
    <location>
        <begin position="183"/>
        <end position="185"/>
    </location>
</feature>
<feature type="helix" evidence="11">
    <location>
        <begin position="188"/>
        <end position="192"/>
    </location>
</feature>
<feature type="helix" evidence="11">
    <location>
        <begin position="193"/>
        <end position="196"/>
    </location>
</feature>
<feature type="strand" evidence="11">
    <location>
        <begin position="204"/>
        <end position="213"/>
    </location>
</feature>
<feature type="strand" evidence="11">
    <location>
        <begin position="216"/>
        <end position="224"/>
    </location>
</feature>
<feature type="strand" evidence="11">
    <location>
        <begin position="226"/>
        <end position="229"/>
    </location>
</feature>
<feature type="helix" evidence="11">
    <location>
        <begin position="235"/>
        <end position="237"/>
    </location>
</feature>
<feature type="helix" evidence="11">
    <location>
        <begin position="239"/>
        <end position="241"/>
    </location>
</feature>
<feature type="strand" evidence="11">
    <location>
        <begin position="242"/>
        <end position="249"/>
    </location>
</feature>
<feature type="helix" evidence="11">
    <location>
        <begin position="254"/>
        <end position="274"/>
    </location>
</feature>
<feature type="strand" evidence="11">
    <location>
        <begin position="278"/>
        <end position="284"/>
    </location>
</feature>
<feature type="strand" evidence="11">
    <location>
        <begin position="289"/>
        <end position="297"/>
    </location>
</feature>
<feature type="helix" evidence="11">
    <location>
        <begin position="298"/>
        <end position="300"/>
    </location>
</feature>
<feature type="helix" evidence="11">
    <location>
        <begin position="301"/>
        <end position="306"/>
    </location>
</feature>
<feature type="helix" evidence="10">
    <location>
        <begin position="309"/>
        <end position="311"/>
    </location>
</feature>
<feature type="turn" evidence="11">
    <location>
        <begin position="315"/>
        <end position="317"/>
    </location>
</feature>
<feature type="helix" evidence="11">
    <location>
        <begin position="321"/>
        <end position="338"/>
    </location>
</feature>
<feature type="strand" evidence="11">
    <location>
        <begin position="348"/>
        <end position="353"/>
    </location>
</feature>
<feature type="turn" evidence="11">
    <location>
        <begin position="354"/>
        <end position="357"/>
    </location>
</feature>
<feature type="strand" evidence="11">
    <location>
        <begin position="358"/>
        <end position="363"/>
    </location>
</feature>
<feature type="helix" evidence="11">
    <location>
        <begin position="366"/>
        <end position="373"/>
    </location>
</feature>
<feature type="turn" evidence="11">
    <location>
        <begin position="374"/>
        <end position="376"/>
    </location>
</feature>
<feature type="helix" evidence="11">
    <location>
        <begin position="380"/>
        <end position="388"/>
    </location>
</feature>
<reference key="1">
    <citation type="journal article" date="2004" name="Proc. Natl. Acad. Sci. U.S.A.">
        <title>The diploid genome sequence of Candida albicans.</title>
        <authorList>
            <person name="Jones T."/>
            <person name="Federspiel N.A."/>
            <person name="Chibana H."/>
            <person name="Dungan J."/>
            <person name="Kalman S."/>
            <person name="Magee B.B."/>
            <person name="Newport G."/>
            <person name="Thorstenson Y.R."/>
            <person name="Agabian N."/>
            <person name="Magee P.T."/>
            <person name="Davis R.W."/>
            <person name="Scherer S."/>
        </authorList>
    </citation>
    <scope>NUCLEOTIDE SEQUENCE [LARGE SCALE GENOMIC DNA]</scope>
    <source>
        <strain>SC5314 / ATCC MYA-2876</strain>
    </source>
</reference>
<reference key="2">
    <citation type="journal article" date="2007" name="Genome Biol.">
        <title>Assembly of the Candida albicans genome into sixteen supercontigs aligned on the eight chromosomes.</title>
        <authorList>
            <person name="van het Hoog M."/>
            <person name="Rast T.J."/>
            <person name="Martchenko M."/>
            <person name="Grindle S."/>
            <person name="Dignard D."/>
            <person name="Hogues H."/>
            <person name="Cuomo C."/>
            <person name="Berriman M."/>
            <person name="Scherer S."/>
            <person name="Magee B.B."/>
            <person name="Whiteway M."/>
            <person name="Chibana H."/>
            <person name="Nantel A."/>
            <person name="Magee P.T."/>
        </authorList>
    </citation>
    <scope>GENOME REANNOTATION</scope>
    <source>
        <strain>SC5314 / ATCC MYA-2876</strain>
    </source>
</reference>
<reference key="3">
    <citation type="journal article" date="2013" name="Genome Biol.">
        <title>Assembly of a phased diploid Candida albicans genome facilitates allele-specific measurements and provides a simple model for repeat and indel structure.</title>
        <authorList>
            <person name="Muzzey D."/>
            <person name="Schwartz K."/>
            <person name="Weissman J.S."/>
            <person name="Sherlock G."/>
        </authorList>
    </citation>
    <scope>NUCLEOTIDE SEQUENCE [LARGE SCALE GENOMIC DNA]</scope>
    <scope>GENOME REANNOTATION</scope>
    <source>
        <strain>SC5314 / ATCC MYA-2876</strain>
    </source>
</reference>
<reference evidence="8 9" key="4">
    <citation type="journal article" date="2015" name="Nucleic Acids Res.">
        <title>Structural and biochemical studies of the distinct activity profiles of Rai1 enzymes.</title>
        <authorList>
            <person name="Wang V.Y."/>
            <person name="Jiao X."/>
            <person name="Kiledjian M."/>
            <person name="Tong L."/>
        </authorList>
    </citation>
    <scope>X-RAY CRYSTALLOGRAPHY (1.99 ANGSTROMS) IN COMPLEX WITH MANGANESE</scope>
    <scope>COFACTOR</scope>
</reference>
<accession>Q5AAT0</accession>
<accession>A0A1D8PDX0</accession>
<dbReference type="EC" id="3.6.1.-" evidence="5 1"/>
<dbReference type="EMBL" id="CP017623">
    <property type="protein sequence ID" value="AOW26335.1"/>
    <property type="molecule type" value="Genomic_DNA"/>
</dbReference>
<dbReference type="RefSeq" id="XP_718819.2">
    <property type="nucleotide sequence ID" value="XM_713726.2"/>
</dbReference>
<dbReference type="PDB" id="5BTH">
    <property type="method" value="X-ray"/>
    <property type="resolution" value="2.20 A"/>
    <property type="chains" value="A=1-391"/>
</dbReference>
<dbReference type="PDB" id="5BUD">
    <property type="method" value="X-ray"/>
    <property type="resolution" value="1.99 A"/>
    <property type="chains" value="A/B=1-391"/>
</dbReference>
<dbReference type="PDBsum" id="5BTH"/>
<dbReference type="PDBsum" id="5BUD"/>
<dbReference type="SMR" id="Q5AAT0"/>
<dbReference type="FunCoup" id="Q5AAT0">
    <property type="interactions" value="669"/>
</dbReference>
<dbReference type="STRING" id="237561.Q5AAT0"/>
<dbReference type="EnsemblFungi" id="C1_06800W_A-T">
    <property type="protein sequence ID" value="C1_06800W_A-T-p1"/>
    <property type="gene ID" value="C1_06800W_A"/>
</dbReference>
<dbReference type="GeneID" id="3639496"/>
<dbReference type="KEGG" id="cal:CAALFM_C106800WA"/>
<dbReference type="CGD" id="CAL0000178137">
    <property type="gene designation" value="orf19.13610"/>
</dbReference>
<dbReference type="VEuPathDB" id="FungiDB:C1_06800W_A"/>
<dbReference type="eggNOG" id="KOG1982">
    <property type="taxonomic scope" value="Eukaryota"/>
</dbReference>
<dbReference type="HOGENOM" id="CLU_024877_4_1_1"/>
<dbReference type="InParanoid" id="Q5AAT0"/>
<dbReference type="OrthoDB" id="5853397at2759"/>
<dbReference type="EvolutionaryTrace" id="Q5AAT0"/>
<dbReference type="PRO" id="PR:Q5AAT0"/>
<dbReference type="Proteomes" id="UP000000559">
    <property type="component" value="Chromosome 1"/>
</dbReference>
<dbReference type="GO" id="GO:0005829">
    <property type="term" value="C:cytosol"/>
    <property type="evidence" value="ECO:0000318"/>
    <property type="project" value="GO_Central"/>
</dbReference>
<dbReference type="GO" id="GO:0090730">
    <property type="term" value="C:Las1 complex"/>
    <property type="evidence" value="ECO:0007669"/>
    <property type="project" value="EnsemblFungi"/>
</dbReference>
<dbReference type="GO" id="GO:0005634">
    <property type="term" value="C:nucleus"/>
    <property type="evidence" value="ECO:0000318"/>
    <property type="project" value="GO_Central"/>
</dbReference>
<dbReference type="GO" id="GO:0110103">
    <property type="term" value="C:RNA polymerase II termination complex"/>
    <property type="evidence" value="ECO:0007669"/>
    <property type="project" value="EnsemblFungi"/>
</dbReference>
<dbReference type="GO" id="GO:0030234">
    <property type="term" value="F:enzyme regulator activity"/>
    <property type="evidence" value="ECO:0007669"/>
    <property type="project" value="EnsemblFungi"/>
</dbReference>
<dbReference type="GO" id="GO:0046872">
    <property type="term" value="F:metal ion binding"/>
    <property type="evidence" value="ECO:0007669"/>
    <property type="project" value="UniProtKB-KW"/>
</dbReference>
<dbReference type="GO" id="GO:0034353">
    <property type="term" value="F:mRNA 5'-diphosphatase activity"/>
    <property type="evidence" value="ECO:0000318"/>
    <property type="project" value="GO_Central"/>
</dbReference>
<dbReference type="GO" id="GO:0000166">
    <property type="term" value="F:nucleotide binding"/>
    <property type="evidence" value="ECO:0007669"/>
    <property type="project" value="UniProtKB-KW"/>
</dbReference>
<dbReference type="GO" id="GO:1990174">
    <property type="term" value="F:phosphodiesterase decapping endonuclease activity"/>
    <property type="evidence" value="ECO:0007669"/>
    <property type="project" value="EnsemblFungi"/>
</dbReference>
<dbReference type="GO" id="GO:0003723">
    <property type="term" value="F:RNA binding"/>
    <property type="evidence" value="ECO:0007669"/>
    <property type="project" value="UniProtKB-KW"/>
</dbReference>
<dbReference type="GO" id="GO:0110152">
    <property type="term" value="F:RNA NAD+-cap (NAD+-forming) hydrolase activity"/>
    <property type="evidence" value="ECO:0007669"/>
    <property type="project" value="RHEA"/>
</dbReference>
<dbReference type="GO" id="GO:0000448">
    <property type="term" value="P:cleavage in ITS2 between 5.8S rRNA and LSU-rRNA of tricistronic rRNA transcript (SSU-rRNA, 5.8S rRNA, LSU-rRNA)"/>
    <property type="evidence" value="ECO:0007669"/>
    <property type="project" value="EnsemblFungi"/>
</dbReference>
<dbReference type="GO" id="GO:0031087">
    <property type="term" value="P:deadenylation-independent decapping of nuclear-transcribed mRNA"/>
    <property type="evidence" value="ECO:0007669"/>
    <property type="project" value="EnsemblFungi"/>
</dbReference>
<dbReference type="GO" id="GO:0006397">
    <property type="term" value="P:mRNA processing"/>
    <property type="evidence" value="ECO:0007669"/>
    <property type="project" value="UniProtKB-KW"/>
</dbReference>
<dbReference type="GO" id="GO:0110155">
    <property type="term" value="P:NAD-cap decapping"/>
    <property type="evidence" value="ECO:0000318"/>
    <property type="project" value="GO_Central"/>
</dbReference>
<dbReference type="GO" id="GO:0071035">
    <property type="term" value="P:nuclear polyadenylation-dependent rRNA catabolic process"/>
    <property type="evidence" value="ECO:0007669"/>
    <property type="project" value="EnsemblFungi"/>
</dbReference>
<dbReference type="GO" id="GO:0000956">
    <property type="term" value="P:nuclear-transcribed mRNA catabolic process"/>
    <property type="evidence" value="ECO:0000318"/>
    <property type="project" value="GO_Central"/>
</dbReference>
<dbReference type="GO" id="GO:1904595">
    <property type="term" value="P:positive regulation of termination of RNA polymerase II transcription"/>
    <property type="evidence" value="ECO:0007669"/>
    <property type="project" value="EnsemblFungi"/>
</dbReference>
<dbReference type="GO" id="GO:0030846">
    <property type="term" value="P:termination of RNA polymerase II transcription, poly(A)-coupled"/>
    <property type="evidence" value="ECO:0007669"/>
    <property type="project" value="EnsemblFungi"/>
</dbReference>
<dbReference type="InterPro" id="IPR013961">
    <property type="entry name" value="RAI1"/>
</dbReference>
<dbReference type="InterPro" id="IPR039039">
    <property type="entry name" value="RAI1-like_fam"/>
</dbReference>
<dbReference type="PANTHER" id="PTHR12395:SF9">
    <property type="entry name" value="DECAPPING AND EXORIBONUCLEASE PROTEIN"/>
    <property type="match status" value="1"/>
</dbReference>
<dbReference type="PANTHER" id="PTHR12395">
    <property type="entry name" value="DOM-3 RELATED"/>
    <property type="match status" value="1"/>
</dbReference>
<dbReference type="Pfam" id="PF08652">
    <property type="entry name" value="RAI1"/>
    <property type="match status" value="1"/>
</dbReference>